<name>PYRG_FRATH</name>
<organism>
    <name type="scientific">Francisella tularensis subsp. holarctica (strain LVS)</name>
    <dbReference type="NCBI Taxonomy" id="376619"/>
    <lineage>
        <taxon>Bacteria</taxon>
        <taxon>Pseudomonadati</taxon>
        <taxon>Pseudomonadota</taxon>
        <taxon>Gammaproteobacteria</taxon>
        <taxon>Thiotrichales</taxon>
        <taxon>Francisellaceae</taxon>
        <taxon>Francisella</taxon>
    </lineage>
</organism>
<evidence type="ECO:0000255" key="1">
    <source>
        <dbReference type="HAMAP-Rule" id="MF_01227"/>
    </source>
</evidence>
<proteinExistence type="inferred from homology"/>
<accession>Q2A2S0</accession>
<comment type="function">
    <text evidence="1">Catalyzes the ATP-dependent amination of UTP to CTP with either L-glutamine or ammonia as the source of nitrogen. Regulates intracellular CTP levels through interactions with the four ribonucleotide triphosphates.</text>
</comment>
<comment type="catalytic activity">
    <reaction evidence="1">
        <text>UTP + L-glutamine + ATP + H2O = CTP + L-glutamate + ADP + phosphate + 2 H(+)</text>
        <dbReference type="Rhea" id="RHEA:26426"/>
        <dbReference type="ChEBI" id="CHEBI:15377"/>
        <dbReference type="ChEBI" id="CHEBI:15378"/>
        <dbReference type="ChEBI" id="CHEBI:29985"/>
        <dbReference type="ChEBI" id="CHEBI:30616"/>
        <dbReference type="ChEBI" id="CHEBI:37563"/>
        <dbReference type="ChEBI" id="CHEBI:43474"/>
        <dbReference type="ChEBI" id="CHEBI:46398"/>
        <dbReference type="ChEBI" id="CHEBI:58359"/>
        <dbReference type="ChEBI" id="CHEBI:456216"/>
        <dbReference type="EC" id="6.3.4.2"/>
    </reaction>
</comment>
<comment type="catalytic activity">
    <reaction evidence="1">
        <text>L-glutamine + H2O = L-glutamate + NH4(+)</text>
        <dbReference type="Rhea" id="RHEA:15889"/>
        <dbReference type="ChEBI" id="CHEBI:15377"/>
        <dbReference type="ChEBI" id="CHEBI:28938"/>
        <dbReference type="ChEBI" id="CHEBI:29985"/>
        <dbReference type="ChEBI" id="CHEBI:58359"/>
    </reaction>
</comment>
<comment type="catalytic activity">
    <reaction evidence="1">
        <text>UTP + NH4(+) + ATP = CTP + ADP + phosphate + 2 H(+)</text>
        <dbReference type="Rhea" id="RHEA:16597"/>
        <dbReference type="ChEBI" id="CHEBI:15378"/>
        <dbReference type="ChEBI" id="CHEBI:28938"/>
        <dbReference type="ChEBI" id="CHEBI:30616"/>
        <dbReference type="ChEBI" id="CHEBI:37563"/>
        <dbReference type="ChEBI" id="CHEBI:43474"/>
        <dbReference type="ChEBI" id="CHEBI:46398"/>
        <dbReference type="ChEBI" id="CHEBI:456216"/>
    </reaction>
</comment>
<comment type="activity regulation">
    <text evidence="1">Allosterically activated by GTP, when glutamine is the substrate; GTP has no effect on the reaction when ammonia is the substrate. The allosteric effector GTP functions by stabilizing the protein conformation that binds the tetrahedral intermediate(s) formed during glutamine hydrolysis. Inhibited by the product CTP, via allosteric rather than competitive inhibition.</text>
</comment>
<comment type="pathway">
    <text evidence="1">Pyrimidine metabolism; CTP biosynthesis via de novo pathway; CTP from UDP: step 2/2.</text>
</comment>
<comment type="subunit">
    <text evidence="1">Homotetramer.</text>
</comment>
<comment type="miscellaneous">
    <text evidence="1">CTPSs have evolved a hybrid strategy for distinguishing between UTP and CTP. The overlapping regions of the product feedback inhibitory and substrate sites recognize a common feature in both compounds, the triphosphate moiety. To differentiate isosteric substrate and product pyrimidine rings, an additional pocket far from the expected kinase/ligase catalytic site, specifically recognizes the cytosine and ribose portions of the product inhibitor.</text>
</comment>
<comment type="similarity">
    <text evidence="1">Belongs to the CTP synthase family.</text>
</comment>
<feature type="chain" id="PRO_0000266119" description="CTP synthase">
    <location>
        <begin position="1"/>
        <end position="546"/>
    </location>
</feature>
<feature type="domain" description="Glutamine amidotransferase type-1" evidence="1">
    <location>
        <begin position="294"/>
        <end position="546"/>
    </location>
</feature>
<feature type="region of interest" description="Amidoligase domain" evidence="1">
    <location>
        <begin position="1"/>
        <end position="269"/>
    </location>
</feature>
<feature type="active site" description="Nucleophile; for glutamine hydrolysis" evidence="1">
    <location>
        <position position="383"/>
    </location>
</feature>
<feature type="active site" evidence="1">
    <location>
        <position position="519"/>
    </location>
</feature>
<feature type="active site" evidence="1">
    <location>
        <position position="521"/>
    </location>
</feature>
<feature type="binding site" evidence="1">
    <location>
        <position position="16"/>
    </location>
    <ligand>
        <name>CTP</name>
        <dbReference type="ChEBI" id="CHEBI:37563"/>
        <note>allosteric inhibitor</note>
    </ligand>
</feature>
<feature type="binding site" evidence="1">
    <location>
        <position position="16"/>
    </location>
    <ligand>
        <name>UTP</name>
        <dbReference type="ChEBI" id="CHEBI:46398"/>
    </ligand>
</feature>
<feature type="binding site" evidence="1">
    <location>
        <begin position="17"/>
        <end position="22"/>
    </location>
    <ligand>
        <name>ATP</name>
        <dbReference type="ChEBI" id="CHEBI:30616"/>
    </ligand>
</feature>
<feature type="binding site" evidence="1">
    <location>
        <position position="74"/>
    </location>
    <ligand>
        <name>ATP</name>
        <dbReference type="ChEBI" id="CHEBI:30616"/>
    </ligand>
</feature>
<feature type="binding site" evidence="1">
    <location>
        <position position="74"/>
    </location>
    <ligand>
        <name>Mg(2+)</name>
        <dbReference type="ChEBI" id="CHEBI:18420"/>
    </ligand>
</feature>
<feature type="binding site" evidence="1">
    <location>
        <position position="143"/>
    </location>
    <ligand>
        <name>Mg(2+)</name>
        <dbReference type="ChEBI" id="CHEBI:18420"/>
    </ligand>
</feature>
<feature type="binding site" evidence="1">
    <location>
        <begin position="150"/>
        <end position="152"/>
    </location>
    <ligand>
        <name>CTP</name>
        <dbReference type="ChEBI" id="CHEBI:37563"/>
        <note>allosteric inhibitor</note>
    </ligand>
</feature>
<feature type="binding site" evidence="1">
    <location>
        <begin position="190"/>
        <end position="195"/>
    </location>
    <ligand>
        <name>CTP</name>
        <dbReference type="ChEBI" id="CHEBI:37563"/>
        <note>allosteric inhibitor</note>
    </ligand>
</feature>
<feature type="binding site" evidence="1">
    <location>
        <begin position="190"/>
        <end position="195"/>
    </location>
    <ligand>
        <name>UTP</name>
        <dbReference type="ChEBI" id="CHEBI:46398"/>
    </ligand>
</feature>
<feature type="binding site" evidence="1">
    <location>
        <position position="226"/>
    </location>
    <ligand>
        <name>CTP</name>
        <dbReference type="ChEBI" id="CHEBI:37563"/>
        <note>allosteric inhibitor</note>
    </ligand>
</feature>
<feature type="binding site" evidence="1">
    <location>
        <position position="226"/>
    </location>
    <ligand>
        <name>UTP</name>
        <dbReference type="ChEBI" id="CHEBI:46398"/>
    </ligand>
</feature>
<feature type="binding site" evidence="1">
    <location>
        <position position="356"/>
    </location>
    <ligand>
        <name>L-glutamine</name>
        <dbReference type="ChEBI" id="CHEBI:58359"/>
    </ligand>
</feature>
<feature type="binding site" evidence="1">
    <location>
        <begin position="384"/>
        <end position="387"/>
    </location>
    <ligand>
        <name>L-glutamine</name>
        <dbReference type="ChEBI" id="CHEBI:58359"/>
    </ligand>
</feature>
<feature type="binding site" evidence="1">
    <location>
        <position position="407"/>
    </location>
    <ligand>
        <name>L-glutamine</name>
        <dbReference type="ChEBI" id="CHEBI:58359"/>
    </ligand>
</feature>
<feature type="binding site" evidence="1">
    <location>
        <position position="474"/>
    </location>
    <ligand>
        <name>L-glutamine</name>
        <dbReference type="ChEBI" id="CHEBI:58359"/>
    </ligand>
</feature>
<dbReference type="EC" id="6.3.4.2" evidence="1"/>
<dbReference type="EMBL" id="AM233362">
    <property type="protein sequence ID" value="CAJ79750.1"/>
    <property type="molecule type" value="Genomic_DNA"/>
</dbReference>
<dbReference type="RefSeq" id="WP_003016498.1">
    <property type="nucleotide sequence ID" value="NZ_CP009694.1"/>
</dbReference>
<dbReference type="SMR" id="Q2A2S0"/>
<dbReference type="MEROPS" id="C26.964"/>
<dbReference type="KEGG" id="ftl:FTL_1311"/>
<dbReference type="UniPathway" id="UPA00159">
    <property type="reaction ID" value="UER00277"/>
</dbReference>
<dbReference type="Proteomes" id="UP000001944">
    <property type="component" value="Chromosome"/>
</dbReference>
<dbReference type="GO" id="GO:0005829">
    <property type="term" value="C:cytosol"/>
    <property type="evidence" value="ECO:0007669"/>
    <property type="project" value="TreeGrafter"/>
</dbReference>
<dbReference type="GO" id="GO:0005524">
    <property type="term" value="F:ATP binding"/>
    <property type="evidence" value="ECO:0007669"/>
    <property type="project" value="UniProtKB-KW"/>
</dbReference>
<dbReference type="GO" id="GO:0003883">
    <property type="term" value="F:CTP synthase activity"/>
    <property type="evidence" value="ECO:0007669"/>
    <property type="project" value="UniProtKB-UniRule"/>
</dbReference>
<dbReference type="GO" id="GO:0004359">
    <property type="term" value="F:glutaminase activity"/>
    <property type="evidence" value="ECO:0007669"/>
    <property type="project" value="RHEA"/>
</dbReference>
<dbReference type="GO" id="GO:0042802">
    <property type="term" value="F:identical protein binding"/>
    <property type="evidence" value="ECO:0007669"/>
    <property type="project" value="TreeGrafter"/>
</dbReference>
<dbReference type="GO" id="GO:0046872">
    <property type="term" value="F:metal ion binding"/>
    <property type="evidence" value="ECO:0007669"/>
    <property type="project" value="UniProtKB-KW"/>
</dbReference>
<dbReference type="GO" id="GO:0044210">
    <property type="term" value="P:'de novo' CTP biosynthetic process"/>
    <property type="evidence" value="ECO:0007669"/>
    <property type="project" value="UniProtKB-UniRule"/>
</dbReference>
<dbReference type="GO" id="GO:0019856">
    <property type="term" value="P:pyrimidine nucleobase biosynthetic process"/>
    <property type="evidence" value="ECO:0007669"/>
    <property type="project" value="TreeGrafter"/>
</dbReference>
<dbReference type="CDD" id="cd03113">
    <property type="entry name" value="CTPS_N"/>
    <property type="match status" value="1"/>
</dbReference>
<dbReference type="CDD" id="cd01746">
    <property type="entry name" value="GATase1_CTP_Synthase"/>
    <property type="match status" value="1"/>
</dbReference>
<dbReference type="FunFam" id="3.40.50.300:FF:000009">
    <property type="entry name" value="CTP synthase"/>
    <property type="match status" value="1"/>
</dbReference>
<dbReference type="FunFam" id="3.40.50.880:FF:000002">
    <property type="entry name" value="CTP synthase"/>
    <property type="match status" value="1"/>
</dbReference>
<dbReference type="Gene3D" id="3.40.50.880">
    <property type="match status" value="1"/>
</dbReference>
<dbReference type="Gene3D" id="3.40.50.300">
    <property type="entry name" value="P-loop containing nucleotide triphosphate hydrolases"/>
    <property type="match status" value="1"/>
</dbReference>
<dbReference type="HAMAP" id="MF_01227">
    <property type="entry name" value="PyrG"/>
    <property type="match status" value="1"/>
</dbReference>
<dbReference type="InterPro" id="IPR029062">
    <property type="entry name" value="Class_I_gatase-like"/>
</dbReference>
<dbReference type="InterPro" id="IPR004468">
    <property type="entry name" value="CTP_synthase"/>
</dbReference>
<dbReference type="InterPro" id="IPR017456">
    <property type="entry name" value="CTP_synthase_N"/>
</dbReference>
<dbReference type="InterPro" id="IPR017926">
    <property type="entry name" value="GATASE"/>
</dbReference>
<dbReference type="InterPro" id="IPR033828">
    <property type="entry name" value="GATase1_CTP_Synthase"/>
</dbReference>
<dbReference type="InterPro" id="IPR027417">
    <property type="entry name" value="P-loop_NTPase"/>
</dbReference>
<dbReference type="NCBIfam" id="NF003792">
    <property type="entry name" value="PRK05380.1"/>
    <property type="match status" value="1"/>
</dbReference>
<dbReference type="NCBIfam" id="TIGR00337">
    <property type="entry name" value="PyrG"/>
    <property type="match status" value="1"/>
</dbReference>
<dbReference type="PANTHER" id="PTHR11550">
    <property type="entry name" value="CTP SYNTHASE"/>
    <property type="match status" value="1"/>
</dbReference>
<dbReference type="PANTHER" id="PTHR11550:SF0">
    <property type="entry name" value="CTP SYNTHASE-RELATED"/>
    <property type="match status" value="1"/>
</dbReference>
<dbReference type="Pfam" id="PF06418">
    <property type="entry name" value="CTP_synth_N"/>
    <property type="match status" value="1"/>
</dbReference>
<dbReference type="Pfam" id="PF00117">
    <property type="entry name" value="GATase"/>
    <property type="match status" value="1"/>
</dbReference>
<dbReference type="SUPFAM" id="SSF52317">
    <property type="entry name" value="Class I glutamine amidotransferase-like"/>
    <property type="match status" value="1"/>
</dbReference>
<dbReference type="SUPFAM" id="SSF52540">
    <property type="entry name" value="P-loop containing nucleoside triphosphate hydrolases"/>
    <property type="match status" value="1"/>
</dbReference>
<dbReference type="PROSITE" id="PS51273">
    <property type="entry name" value="GATASE_TYPE_1"/>
    <property type="match status" value="1"/>
</dbReference>
<protein>
    <recommendedName>
        <fullName evidence="1">CTP synthase</fullName>
        <ecNumber evidence="1">6.3.4.2</ecNumber>
    </recommendedName>
    <alternativeName>
        <fullName evidence="1">Cytidine 5'-triphosphate synthase</fullName>
    </alternativeName>
    <alternativeName>
        <fullName evidence="1">Cytidine triphosphate synthetase</fullName>
        <shortName evidence="1">CTP synthetase</shortName>
        <shortName evidence="1">CTPS</shortName>
    </alternativeName>
    <alternativeName>
        <fullName evidence="1">UTP--ammonia ligase</fullName>
    </alternativeName>
</protein>
<reference key="1">
    <citation type="submission" date="2006-03" db="EMBL/GenBank/DDBJ databases">
        <title>Complete genome sequence of Francisella tularensis LVS (Live Vaccine Strain).</title>
        <authorList>
            <person name="Chain P."/>
            <person name="Larimer F."/>
            <person name="Land M."/>
            <person name="Stilwagen S."/>
            <person name="Larsson P."/>
            <person name="Bearden S."/>
            <person name="Chu M."/>
            <person name="Oyston P."/>
            <person name="Forsman M."/>
            <person name="Andersson S."/>
            <person name="Lindler L."/>
            <person name="Titball R."/>
            <person name="Garcia E."/>
        </authorList>
    </citation>
    <scope>NUCLEOTIDE SEQUENCE [LARGE SCALE GENOMIC DNA]</scope>
    <source>
        <strain>LVS</strain>
    </source>
</reference>
<sequence length="546" mass="61042">MNSNTKIIFVTGGVVSSLGKGVTAASLATLLESRGLNVTMMKLDPYINVDPGTMSPLQHGEVFVTEDGAETDLDLGHYERFIRNKMTQANNFTTGKVYQSVLRRERKGDYLGATIQVIPHITDEIKRRICSGIADDVDVAIVEIGGTVGDIESQPFLEAIRQLRIELGRNRTLFVHLTLLPYIKVAGEIKTKPTQHSVKELRGIGIQADVLVCRCEKKFDDSEKRKIALFTNVDQDCIFTAEDVDTIYEVPLKYNQQGFDAKLVELLNLNAKEADLSEWQNVVNTIRDVKGEVIIAMVGKYVSLTEAYKSLNEALYNAGYKKGVKVKIKFVDSEDVNENNVESYFKDVAAILVPGGFGSRGVEGKIISIKYARENQIPFLGICLGMQLAVIEYARNILGIKDAHSSELEPTTANPVIGLITEWQAEDGTVHQRTHSSDLGGTMRLGGYKCVLKQGSRAREIYQADEVVERHRHRYEVNSNYVERLEEAGLIFSGRSEDNKLMELIEIPQHKWFIACQAHPEFTSTPRYGHKLFESYIQAAIENSNN</sequence>
<keyword id="KW-0067">ATP-binding</keyword>
<keyword id="KW-0315">Glutamine amidotransferase</keyword>
<keyword id="KW-0436">Ligase</keyword>
<keyword id="KW-0460">Magnesium</keyword>
<keyword id="KW-0479">Metal-binding</keyword>
<keyword id="KW-0547">Nucleotide-binding</keyword>
<keyword id="KW-0665">Pyrimidine biosynthesis</keyword>
<keyword id="KW-1185">Reference proteome</keyword>
<gene>
    <name evidence="1" type="primary">pyrG</name>
    <name type="ordered locus">FTL_1311</name>
</gene>